<accession>P22776</accession>
<gene>
    <name type="ordered locus">Ba71V-081</name>
    <name type="ORF">B646L</name>
</gene>
<dbReference type="EMBL" id="M34142">
    <property type="protein sequence ID" value="AAA42730.1"/>
    <property type="molecule type" value="Genomic_DNA"/>
</dbReference>
<dbReference type="EMBL" id="U18466">
    <property type="protein sequence ID" value="AAA65311.1"/>
    <property type="molecule type" value="Genomic_DNA"/>
</dbReference>
<dbReference type="PIR" id="A34745">
    <property type="entry name" value="VCXFAS"/>
</dbReference>
<dbReference type="RefSeq" id="NP_042775.1">
    <property type="nucleotide sequence ID" value="NC_001659.2"/>
</dbReference>
<dbReference type="PDB" id="6KU9">
    <property type="method" value="EM"/>
    <property type="resolution" value="2.67 A"/>
    <property type="chains" value="A/B/C=1-646"/>
</dbReference>
<dbReference type="PDB" id="6L2T">
    <property type="method" value="EM"/>
    <property type="resolution" value="4.10 A"/>
    <property type="chains" value="A/B/C=1-646"/>
</dbReference>
<dbReference type="PDB" id="7EMD">
    <property type="method" value="X-ray"/>
    <property type="resolution" value="1.70 A"/>
    <property type="chains" value="C=97-105"/>
</dbReference>
<dbReference type="PDB" id="8Y3O">
    <property type="method" value="EM"/>
    <property type="resolution" value="2.75 A"/>
    <property type="chains" value="A/B/C=1-646"/>
</dbReference>
<dbReference type="PDB" id="8Y3P">
    <property type="method" value="EM"/>
    <property type="resolution" value="3.48 A"/>
    <property type="chains" value="A/B/C=1-646"/>
</dbReference>
<dbReference type="PDB" id="8Y3Q">
    <property type="method" value="EM"/>
    <property type="resolution" value="2.98 A"/>
    <property type="chains" value="A/B/C=1-646"/>
</dbReference>
<dbReference type="PDB" id="8Y3R">
    <property type="method" value="EM"/>
    <property type="resolution" value="3.48 A"/>
    <property type="chains" value="A/C/D=1-646"/>
</dbReference>
<dbReference type="PDB" id="8ZL9">
    <property type="method" value="EM"/>
    <property type="resolution" value="4.36 A"/>
    <property type="chains" value="C/D/E=1-646"/>
</dbReference>
<dbReference type="PDBsum" id="6KU9"/>
<dbReference type="PDBsum" id="6L2T"/>
<dbReference type="PDBsum" id="7EMD"/>
<dbReference type="PDBsum" id="8Y3O"/>
<dbReference type="PDBsum" id="8Y3P"/>
<dbReference type="PDBsum" id="8Y3Q"/>
<dbReference type="PDBsum" id="8Y3R"/>
<dbReference type="PDBsum" id="8ZL9"/>
<dbReference type="EMDB" id="EMD-0814"/>
<dbReference type="SMR" id="P22776"/>
<dbReference type="ABCD" id="P22776">
    <property type="antibodies" value="9 sequenced antibodies"/>
</dbReference>
<dbReference type="GeneID" id="22220311"/>
<dbReference type="KEGG" id="vg:22220311"/>
<dbReference type="Proteomes" id="UP000000624">
    <property type="component" value="Segment"/>
</dbReference>
<dbReference type="GO" id="GO:0044164">
    <property type="term" value="C:host cell cytosol"/>
    <property type="evidence" value="ECO:0007669"/>
    <property type="project" value="UniProtKB-SubCell"/>
</dbReference>
<dbReference type="GO" id="GO:0044167">
    <property type="term" value="C:host cell endoplasmic reticulum membrane"/>
    <property type="evidence" value="ECO:0007669"/>
    <property type="project" value="UniProtKB-SubCell"/>
</dbReference>
<dbReference type="GO" id="GO:0016020">
    <property type="term" value="C:membrane"/>
    <property type="evidence" value="ECO:0007669"/>
    <property type="project" value="UniProtKB-KW"/>
</dbReference>
<dbReference type="GO" id="GO:0019028">
    <property type="term" value="C:viral capsid"/>
    <property type="evidence" value="ECO:0007669"/>
    <property type="project" value="UniProtKB-KW"/>
</dbReference>
<dbReference type="GO" id="GO:0005198">
    <property type="term" value="F:structural molecule activity"/>
    <property type="evidence" value="ECO:0007669"/>
    <property type="project" value="InterPro"/>
</dbReference>
<dbReference type="GO" id="GO:0046718">
    <property type="term" value="P:symbiont entry into host cell"/>
    <property type="evidence" value="ECO:0007669"/>
    <property type="project" value="UniProtKB-KW"/>
</dbReference>
<dbReference type="GO" id="GO:0019062">
    <property type="term" value="P:virion attachment to host cell"/>
    <property type="evidence" value="ECO:0007669"/>
    <property type="project" value="UniProtKB-KW"/>
</dbReference>
<dbReference type="Gene3D" id="2.70.9.10">
    <property type="entry name" value="Adenovirus Type 2 Hexon, domain 4"/>
    <property type="match status" value="1"/>
</dbReference>
<dbReference type="Gene3D" id="2.70.9.20">
    <property type="entry name" value="Major capsid protein Vp54"/>
    <property type="match status" value="1"/>
</dbReference>
<dbReference type="InterPro" id="IPR007542">
    <property type="entry name" value="MCP_C"/>
</dbReference>
<dbReference type="InterPro" id="IPR038519">
    <property type="entry name" value="MCP_C_sf"/>
</dbReference>
<dbReference type="InterPro" id="IPR016112">
    <property type="entry name" value="VP_dsDNA_II"/>
</dbReference>
<dbReference type="Pfam" id="PF04451">
    <property type="entry name" value="Capsid_NCLDV"/>
    <property type="match status" value="1"/>
</dbReference>
<dbReference type="SUPFAM" id="SSF49749">
    <property type="entry name" value="Group II dsDNA viruses VP"/>
    <property type="match status" value="2"/>
</dbReference>
<sequence>MASGGAFCLIANDGKADKIILAQDLLNSRISNIKNVNKSYGKPDPEPTLSQIEETHLVHFNAHFKPYVPVGFEYNKVRPHTGTPTLGNKLTFGIPQYGDFFHDMVGHHILGACHSSWQDAPIQGTAQMGAHGQLQTFPRNGYDWDNQTPLEGAVYTLVDPFGRPIVPGTKNAYRNLVYYCEYPGERLYENVRFDVNGNSLDEYSSDVTTLVRKFCIPGDKMTGYKHLVGQEVSVEGTSGPLLCNIHDLHKPHQSKPILTDENDTQRTCSHTNPKFLSQHFPENSHNIQTAGKQDITPITDATYLDIRRNVHYSCNGPQTPKYYQPPLALWIKLRFWFNENVNLAIPSVSIPFGERFITIKLASQKDLVNEFPGLFIRQSRFIPGRPSRRNIRFKPWFIPGVINEISLTNNELYINNLFVTPEIHNLFVKRVRFSLIRVHKTQVTHTNNNHHDEKLMSALKWPIEYMFIGLKPTWNISDQNPHQHRDWHKFGHVVNAIMQPTHHAEISFQDRDTALPDACSSISDISPVTYPITLPIIKNISVTAHGINLIDKFPSKFCSSYIPFHYGGNAIKTPDDPGAMMITFALKPREEYQPSGHINVSRAREFYISWDTDYVGSITTADLVVSASAINFLLLQNGSAVLRYST</sequence>
<reference key="1">
    <citation type="journal article" date="1990" name="Virology">
        <title>Mapping and sequence of the gene coding for protein p72, the major capsid protein of African swine fever virus.</title>
        <authorList>
            <person name="Lopez-Otin C."/>
            <person name="Freije J.M.P."/>
            <person name="Parra F."/>
            <person name="Mendez E."/>
            <person name="Vinuela E."/>
        </authorList>
    </citation>
    <scope>NUCLEOTIDE SEQUENCE [GENOMIC DNA]</scope>
    <scope>PARTIAL PROTEIN SEQUENCE</scope>
</reference>
<reference key="2">
    <citation type="journal article" date="1995" name="Virology">
        <title>Analysis of the complete nucleotide sequence of African swine fever virus.</title>
        <authorList>
            <person name="Yanez R.J."/>
            <person name="Rodriguez J.M."/>
            <person name="Nogal M.L."/>
            <person name="Yuste L."/>
            <person name="Enriquez C."/>
            <person name="Rodriguez J.F."/>
            <person name="Vinuela E."/>
        </authorList>
    </citation>
    <scope>NUCLEOTIDE SEQUENCE [LARGE SCALE GENOMIC DNA]</scope>
</reference>
<reference key="3">
    <citation type="journal article" date="1996" name="J. Virol.">
        <title>Neutralizing antibodies to different proteins of African swine fever virus inhibit both virus attachment and internalization.</title>
        <authorList>
            <person name="Gomez-Puertas P."/>
            <person name="Rodriguez F."/>
            <person name="Oviedo J.M."/>
            <person name="Ramiro-Ibanez F."/>
            <person name="Ruiz-Gonzalvo F."/>
            <person name="Alonso C."/>
            <person name="Escribano J.M."/>
        </authorList>
    </citation>
    <scope>FUNCTION</scope>
</reference>
<reference key="4">
    <citation type="journal article" date="1996" name="J. Virol.">
        <title>Involvement of the endoplasmic reticulum in the assembly and envelopment of African swine fever virus.</title>
        <authorList>
            <person name="Cobbold C."/>
            <person name="Whittle J.T."/>
            <person name="Wileman T."/>
        </authorList>
    </citation>
    <scope>SUBCELLULAR LOCATION</scope>
    <scope>INDUCTION</scope>
</reference>
<reference key="5">
    <citation type="journal article" date="1998" name="J. Virol.">
        <title>Inducible gene expression from African swine fever virus recombinants: analysis of the major capsid protein p72.</title>
        <authorList>
            <person name="Garcia-Escudero R."/>
            <person name="Andres G."/>
            <person name="Almazan F."/>
            <person name="Vinuela E."/>
        </authorList>
    </citation>
    <scope>FUNCTION</scope>
    <scope>SUBCELLULAR LOCATION</scope>
</reference>
<reference key="6">
    <citation type="journal article" date="1998" name="J. Virol.">
        <title>The major structural protein of African swine fever virus, p73, is packaged into large structures, indicative of viral capsid or matrix precursors, on the endoplasmic reticulum.</title>
        <authorList>
            <person name="Cobbold C."/>
            <person name="Wileman T."/>
        </authorList>
    </citation>
    <scope>SUBCELLULAR LOCATION</scope>
    <scope>SUBUNIT</scope>
</reference>
<reference key="7">
    <citation type="journal article" date="2001" name="J. Virol.">
        <title>African swine fever virus structural protein pE120R is essential for virus transport from assembly sites to plasma membrane but not for infectivity.</title>
        <authorList>
            <person name="Andres G."/>
            <person name="Garcia-Escudero R."/>
            <person name="Vinuela E."/>
            <person name="Salas M.L."/>
            <person name="Rodriguez J.M."/>
        </authorList>
    </citation>
    <scope>INTERACTION WITH PROTEIN P14.5/PE120R</scope>
</reference>
<reference key="8">
    <citation type="journal article" date="2018" name="J. Virol.">
        <title>A Proteomic Atlas of the African Swine Fever Virus Particle.</title>
        <authorList>
            <person name="Alejo A."/>
            <person name="Matamoros T."/>
            <person name="Guerra M."/>
            <person name="Andres G."/>
        </authorList>
    </citation>
    <scope>SUBCELLULAR LOCATION</scope>
</reference>
<reference key="9">
    <citation type="journal article" date="2020" name="J. Virol.">
        <title>The African Swine Fever Virus Transcriptome.</title>
        <authorList>
            <person name="Cackett G."/>
            <person name="Matelska D."/>
            <person name="Sykora M."/>
            <person name="Portugal R."/>
            <person name="Malecki M."/>
            <person name="Baehler J."/>
            <person name="Dixon L."/>
            <person name="Werner F."/>
        </authorList>
    </citation>
    <scope>INDUCTION</scope>
</reference>
<reference key="10">
    <citation type="journal article" date="2021" name="Viruses">
        <title>Unpicking the Secrets of African Swine Fever Viral Replication Sites.</title>
        <authorList>
            <person name="Aicher S.M."/>
            <person name="Monaghan P."/>
            <person name="Netherton C.L."/>
            <person name="Hawes P.C."/>
        </authorList>
    </citation>
    <scope>SUBCELLULAR LOCATION</scope>
</reference>
<reference evidence="11" key="11">
    <citation type="journal article" date="2019" name="Cell Res.">
        <title>Structure of the African swine fever virus major capsid protein p72.</title>
        <authorList>
            <person name="Liu Q."/>
            <person name="Ma B."/>
            <person name="Qian N."/>
            <person name="Zhang F."/>
            <person name="Tan X."/>
            <person name="Lei J."/>
            <person name="Xiang Y."/>
        </authorList>
    </citation>
    <scope>STRUCTURE BY ELECTRON MICROSCOPY (2.67 ANGSTROMS)</scope>
    <scope>FUNCTION</scope>
</reference>
<reference evidence="12" key="12">
    <citation type="journal article" date="2019" name="Science">
        <title>Architecture of African swine fever virus and implications for viral assembly.</title>
        <authorList>
            <person name="Wang N."/>
            <person name="Zhao D."/>
            <person name="Wang J."/>
            <person name="Zhang Y."/>
            <person name="Wang M."/>
            <person name="Gao Y."/>
            <person name="Li F."/>
            <person name="Wang J."/>
            <person name="Bu Z."/>
            <person name="Rao Z."/>
            <person name="Wang X."/>
        </authorList>
    </citation>
    <scope>STRUCTURE BY ELECTRON MICROSCOPY (4.1 ANGSTROMS)</scope>
    <scope>FUNCTION</scope>
    <scope>SUBCELLULAR LOCATION</scope>
    <scope>SUBUNIT</scope>
    <scope>INTERACTION WITH THE MINOR CAPSID PROTEIN M1249L</scope>
    <scope>INTERACTION WITH THE MINOR CAPSID PROTEIN P17</scope>
</reference>
<keyword id="KW-0002">3D-structure</keyword>
<keyword id="KW-0167">Capsid protein</keyword>
<keyword id="KW-0903">Direct protein sequencing</keyword>
<keyword id="KW-1035">Host cytoplasm</keyword>
<keyword id="KW-1038">Host endoplasmic reticulum</keyword>
<keyword id="KW-1043">Host membrane</keyword>
<keyword id="KW-0945">Host-virus interaction</keyword>
<keyword id="KW-0426">Late protein</keyword>
<keyword id="KW-0472">Membrane</keyword>
<keyword id="KW-1185">Reference proteome</keyword>
<keyword id="KW-1161">Viral attachment to host cell</keyword>
<keyword id="KW-0946">Virion</keyword>
<keyword id="KW-1160">Virus entry into host cell</keyword>
<organismHost>
    <name type="scientific">Ornithodoros</name>
    <name type="common">relapsing fever ticks</name>
    <dbReference type="NCBI Taxonomy" id="6937"/>
</organismHost>
<organismHost>
    <name type="scientific">Sus scrofa</name>
    <name type="common">Pig</name>
    <dbReference type="NCBI Taxonomy" id="9823"/>
</organismHost>
<proteinExistence type="evidence at protein level"/>
<organism>
    <name type="scientific">African swine fever virus (strain Badajoz 1971 Vero-adapted)</name>
    <name type="common">Ba71V</name>
    <name type="synonym">ASFV</name>
    <dbReference type="NCBI Taxonomy" id="10498"/>
    <lineage>
        <taxon>Viruses</taxon>
        <taxon>Varidnaviria</taxon>
        <taxon>Bamfordvirae</taxon>
        <taxon>Nucleocytoviricota</taxon>
        <taxon>Pokkesviricetes</taxon>
        <taxon>Asfuvirales</taxon>
        <taxon>Asfarviridae</taxon>
        <taxon>Asfivirus</taxon>
        <taxon>African swine fever virus</taxon>
    </lineage>
</organism>
<protein>
    <recommendedName>
        <fullName evidence="9">Hexon protein p72</fullName>
    </recommendedName>
    <alternativeName>
        <fullName>Major capsid protein</fullName>
        <shortName>MCP</shortName>
    </alternativeName>
    <alternativeName>
        <fullName>p72</fullName>
    </alternativeName>
    <alternativeName>
        <fullName>p73</fullName>
    </alternativeName>
</protein>
<evidence type="ECO:0000269" key="1">
    <source>
    </source>
</evidence>
<evidence type="ECO:0000269" key="2">
    <source>
    </source>
</evidence>
<evidence type="ECO:0000269" key="3">
    <source>
    </source>
</evidence>
<evidence type="ECO:0000269" key="4">
    <source>
    </source>
</evidence>
<evidence type="ECO:0000269" key="5">
    <source>
    </source>
</evidence>
<evidence type="ECO:0000269" key="6">
    <source>
    </source>
</evidence>
<evidence type="ECO:0000269" key="7">
    <source>
    </source>
</evidence>
<evidence type="ECO:0000269" key="8">
    <source>
    </source>
</evidence>
<evidence type="ECO:0000303" key="9">
    <source>
    </source>
</evidence>
<evidence type="ECO:0000305" key="10"/>
<evidence type="ECO:0007744" key="11">
    <source>
        <dbReference type="PDB" id="6KU9"/>
    </source>
</evidence>
<evidence type="ECO:0007744" key="12">
    <source>
        <dbReference type="PDB" id="6L2T"/>
    </source>
</evidence>
<evidence type="ECO:0007829" key="13">
    <source>
        <dbReference type="PDB" id="6KU9"/>
    </source>
</evidence>
<comment type="function">
    <text evidence="2 5 8">Capsid protein that self-assembles to form the pseudo-hexameric capsomers of the icosahedral capsid (PubMed:31624094). The capsid is constructed of 2760 pseudo-hexameric capsomers and 12 pentameric capsomers, with a T=277 symmetry, about 200 nm in diameter (PubMed:31624094). The capsid encapsulates the DNA-containing nucleoid, the core shell and the inner membrane (PubMed:9580160). Plays an essential role in virion assembly (PubMed:9580160). Involved in virus attachment to the host cell (PubMed:8764090).</text>
</comment>
<comment type="subunit">
    <text evidence="2 7">Homotrimer (PubMed:31624094). The membrane-bound form, but not the cytosolic one, assembles into large complexes (PubMed:9573294). Interacts with the minor capsid proteins M1249L and p17; these interactions form a rigid zipper structure that stabilizes the capsomers (PubMed:31624094).</text>
</comment>
<comment type="subcellular location">
    <subcellularLocation>
        <location evidence="1 2 4 7">Virion</location>
    </subcellularLocation>
    <subcellularLocation>
        <location>Host endoplasmic reticulum membrane</location>
        <topology evidence="6 7">Peripheral membrane protein</topology>
    </subcellularLocation>
    <subcellularLocation>
        <location evidence="7">Host cytoplasm</location>
        <location evidence="7">Host cytosol</location>
    </subcellularLocation>
    <text evidence="2 4">Present in the outer part of the capsid shell (PubMed:31624094). Localizes to the viral factory at 16 hpi (PubMed:33429879).</text>
</comment>
<comment type="induction">
    <text evidence="3 6">Expressed in the late phase of the viral replicative cycle.</text>
</comment>
<comment type="similarity">
    <text evidence="10">Belongs to the NCLDV major capsid protein family.</text>
</comment>
<feature type="chain" id="PRO_0000221942" description="Hexon protein p72">
    <location>
        <begin position="1"/>
        <end position="646"/>
    </location>
</feature>
<feature type="sequence conflict" description="In Ref. 1; AAA42730." evidence="10" ref="1">
    <original>G</original>
    <variation>A</variation>
    <location>
        <position position="93"/>
    </location>
</feature>
<feature type="strand" evidence="13">
    <location>
        <begin position="72"/>
        <end position="77"/>
    </location>
</feature>
<feature type="strand" evidence="13">
    <location>
        <begin position="80"/>
        <end position="83"/>
    </location>
</feature>
<feature type="strand" evidence="13">
    <location>
        <begin position="88"/>
        <end position="93"/>
    </location>
</feature>
<feature type="strand" evidence="13">
    <location>
        <begin position="98"/>
        <end position="110"/>
    </location>
</feature>
<feature type="strand" evidence="13">
    <location>
        <begin position="144"/>
        <end position="149"/>
    </location>
</feature>
<feature type="strand" evidence="13">
    <location>
        <begin position="153"/>
        <end position="158"/>
    </location>
</feature>
<feature type="strand" evidence="13">
    <location>
        <begin position="176"/>
        <end position="179"/>
    </location>
</feature>
<feature type="helix" evidence="13">
    <location>
        <begin position="183"/>
        <end position="187"/>
    </location>
</feature>
<feature type="strand" evidence="13">
    <location>
        <begin position="188"/>
        <end position="197"/>
    </location>
</feature>
<feature type="strand" evidence="13">
    <location>
        <begin position="199"/>
        <end position="204"/>
    </location>
</feature>
<feature type="helix" evidence="13">
    <location>
        <begin position="205"/>
        <end position="215"/>
    </location>
</feature>
<feature type="strand" evidence="13">
    <location>
        <begin position="218"/>
        <end position="220"/>
    </location>
</feature>
<feature type="helix" evidence="13">
    <location>
        <begin position="221"/>
        <end position="228"/>
    </location>
</feature>
<feature type="strand" evidence="13">
    <location>
        <begin position="234"/>
        <end position="241"/>
    </location>
</feature>
<feature type="strand" evidence="13">
    <location>
        <begin position="307"/>
        <end position="314"/>
    </location>
</feature>
<feature type="strand" evidence="13">
    <location>
        <begin position="321"/>
        <end position="324"/>
    </location>
</feature>
<feature type="strand" evidence="13">
    <location>
        <begin position="327"/>
        <end position="332"/>
    </location>
</feature>
<feature type="turn" evidence="13">
    <location>
        <begin position="337"/>
        <end position="339"/>
    </location>
</feature>
<feature type="turn" evidence="13">
    <location>
        <begin position="347"/>
        <end position="349"/>
    </location>
</feature>
<feature type="strand" evidence="13">
    <location>
        <begin position="354"/>
        <end position="361"/>
    </location>
</feature>
<feature type="turn" evidence="13">
    <location>
        <begin position="365"/>
        <end position="367"/>
    </location>
</feature>
<feature type="strand" evidence="13">
    <location>
        <begin position="368"/>
        <end position="371"/>
    </location>
</feature>
<feature type="strand" evidence="13">
    <location>
        <begin position="375"/>
        <end position="382"/>
    </location>
</feature>
<feature type="strand" evidence="13">
    <location>
        <begin position="384"/>
        <end position="395"/>
    </location>
</feature>
<feature type="strand" evidence="13">
    <location>
        <begin position="407"/>
        <end position="417"/>
    </location>
</feature>
<feature type="strand" evidence="13">
    <location>
        <begin position="439"/>
        <end position="446"/>
    </location>
</feature>
<feature type="strand" evidence="13">
    <location>
        <begin position="449"/>
        <end position="455"/>
    </location>
</feature>
<feature type="strand" evidence="13">
    <location>
        <begin position="463"/>
        <end position="472"/>
    </location>
</feature>
<feature type="helix" evidence="13">
    <location>
        <begin position="473"/>
        <end position="476"/>
    </location>
</feature>
<feature type="helix" evidence="13">
    <location>
        <begin position="483"/>
        <end position="486"/>
    </location>
</feature>
<feature type="strand" evidence="13">
    <location>
        <begin position="491"/>
        <end position="498"/>
    </location>
</feature>
<feature type="strand" evidence="13">
    <location>
        <begin position="501"/>
        <end position="506"/>
    </location>
</feature>
<feature type="strand" evidence="13">
    <location>
        <begin position="509"/>
        <end position="511"/>
    </location>
</feature>
<feature type="strand" evidence="13">
    <location>
        <begin position="517"/>
        <end position="523"/>
    </location>
</feature>
<feature type="strand" evidence="13">
    <location>
        <begin position="528"/>
        <end position="534"/>
    </location>
</feature>
<feature type="strand" evidence="13">
    <location>
        <begin position="536"/>
        <end position="543"/>
    </location>
</feature>
<feature type="strand" evidence="13">
    <location>
        <begin position="545"/>
        <end position="547"/>
    </location>
</feature>
<feature type="helix" evidence="13">
    <location>
        <begin position="555"/>
        <end position="559"/>
    </location>
</feature>
<feature type="helix" evidence="13">
    <location>
        <begin position="561"/>
        <end position="565"/>
    </location>
</feature>
<feature type="strand" evidence="13">
    <location>
        <begin position="579"/>
        <end position="593"/>
    </location>
</feature>
<feature type="strand" evidence="13">
    <location>
        <begin position="607"/>
        <end position="614"/>
    </location>
</feature>
<feature type="strand" evidence="13">
    <location>
        <begin position="617"/>
        <end position="619"/>
    </location>
</feature>
<feature type="strand" evidence="13">
    <location>
        <begin position="621"/>
        <end position="629"/>
    </location>
</feature>
<name>CAPSH_ASFB7</name>